<organism>
    <name type="scientific">Staphylococcus aureus (strain MW2)</name>
    <dbReference type="NCBI Taxonomy" id="196620"/>
    <lineage>
        <taxon>Bacteria</taxon>
        <taxon>Bacillati</taxon>
        <taxon>Bacillota</taxon>
        <taxon>Bacilli</taxon>
        <taxon>Bacillales</taxon>
        <taxon>Staphylococcaceae</taxon>
        <taxon>Staphylococcus</taxon>
    </lineage>
</organism>
<comment type="function">
    <text evidence="1">Is able to cleave peptidoglycan.</text>
</comment>
<comment type="subcellular location">
    <subcellularLocation>
        <location evidence="1">Secreted</location>
    </subcellularLocation>
</comment>
<comment type="similarity">
    <text evidence="2">Belongs to the transglycosylase family. IsaA subfamily.</text>
</comment>
<gene>
    <name type="primary">isaA</name>
    <name type="ordered locus">MW2490</name>
</gene>
<accession>P60157</accession>
<accession>Q9LAB6</accession>
<keyword id="KW-0326">Glycosidase</keyword>
<keyword id="KW-0378">Hydrolase</keyword>
<keyword id="KW-0964">Secreted</keyword>
<keyword id="KW-0732">Signal</keyword>
<dbReference type="EC" id="3.2.-.-"/>
<dbReference type="EMBL" id="BA000033">
    <property type="protein sequence ID" value="BAB96355.1"/>
    <property type="molecule type" value="Genomic_DNA"/>
</dbReference>
<dbReference type="RefSeq" id="WP_000751267.1">
    <property type="nucleotide sequence ID" value="NC_003923.1"/>
</dbReference>
<dbReference type="SMR" id="P60157"/>
<dbReference type="CAZy" id="GH23">
    <property type="family name" value="Glycoside Hydrolase Family 23"/>
</dbReference>
<dbReference type="KEGG" id="sam:MW2490"/>
<dbReference type="HOGENOM" id="CLU_099865_0_0_9"/>
<dbReference type="GO" id="GO:0005576">
    <property type="term" value="C:extracellular region"/>
    <property type="evidence" value="ECO:0007669"/>
    <property type="project" value="UniProtKB-SubCell"/>
</dbReference>
<dbReference type="GO" id="GO:0016798">
    <property type="term" value="F:hydrolase activity, acting on glycosyl bonds"/>
    <property type="evidence" value="ECO:0007669"/>
    <property type="project" value="UniProtKB-KW"/>
</dbReference>
<dbReference type="Gene3D" id="1.10.530.10">
    <property type="match status" value="1"/>
</dbReference>
<dbReference type="InterPro" id="IPR023346">
    <property type="entry name" value="Lysozyme-like_dom_sf"/>
</dbReference>
<dbReference type="InterPro" id="IPR008258">
    <property type="entry name" value="Transglycosylase_SLT_dom_1"/>
</dbReference>
<dbReference type="Pfam" id="PF01464">
    <property type="entry name" value="SLT"/>
    <property type="match status" value="1"/>
</dbReference>
<dbReference type="SUPFAM" id="SSF53955">
    <property type="entry name" value="Lysozyme-like"/>
    <property type="match status" value="1"/>
</dbReference>
<evidence type="ECO:0000250" key="1"/>
<evidence type="ECO:0000305" key="2"/>
<name>ISAA_STAAW</name>
<proteinExistence type="inferred from homology"/>
<reference key="1">
    <citation type="journal article" date="2002" name="Lancet">
        <title>Genome and virulence determinants of high virulence community-acquired MRSA.</title>
        <authorList>
            <person name="Baba T."/>
            <person name="Takeuchi F."/>
            <person name="Kuroda M."/>
            <person name="Yuzawa H."/>
            <person name="Aoki K."/>
            <person name="Oguchi A."/>
            <person name="Nagai Y."/>
            <person name="Iwama N."/>
            <person name="Asano K."/>
            <person name="Naimi T."/>
            <person name="Kuroda H."/>
            <person name="Cui L."/>
            <person name="Yamamoto K."/>
            <person name="Hiramatsu K."/>
        </authorList>
    </citation>
    <scope>NUCLEOTIDE SEQUENCE [LARGE SCALE GENOMIC DNA]</scope>
    <source>
        <strain>MW2</strain>
    </source>
</reference>
<protein>
    <recommendedName>
        <fullName>Probable transglycosylase IsaA</fullName>
        <ecNumber>3.2.-.-</ecNumber>
    </recommendedName>
    <alternativeName>
        <fullName>Immunodominant staphylococcal antigen A</fullName>
    </alternativeName>
</protein>
<sequence length="233" mass="24203">MKKTIMASSLAVALGVTGYAAGTGHQAHAAEVNVDQAHLVDLAHNHQDQLNAAPIKDGAYDIHFVKDGFQYNFTSNGTTWSWSYEAANGQTAGFSNVAGADYTTSYNQGSNVQSVSYNAQSSNSNVEAVSAPTYHNYSTSTTSSSVRLSNGNTAGATGSSAAQIMAQRTGVSASTWAAIIARESNGQVNAYNPSGASGLFQTMPGWGPTNTVDQQINAAVKAYKAQGLGAWGF</sequence>
<feature type="signal peptide" evidence="1">
    <location>
        <begin position="1"/>
        <end position="29"/>
    </location>
</feature>
<feature type="chain" id="PRO_0000021531" description="Probable transglycosylase IsaA">
    <location>
        <begin position="30"/>
        <end position="233"/>
    </location>
</feature>